<reference key="1">
    <citation type="submission" date="1995-01" db="EMBL/GenBank/DDBJ databases">
        <title>Identification, sequencing and characterization of an aluminium-inducible Escherichia coli gene.</title>
        <authorList>
            <person name="Guzzo A."/>
            <person name="Macintyre G."/>
            <person name="Diorio C."/>
            <person name="Salmon K."/>
            <person name="Dubow M.S."/>
        </authorList>
    </citation>
    <scope>NUCLEOTIDE SEQUENCE [GENOMIC DNA]</scope>
    <source>
        <strain>K12</strain>
    </source>
</reference>
<reference key="2">
    <citation type="journal article" date="1997" name="DNA Res.">
        <title>Construction of a contiguous 874-kb sequence of the Escherichia coli-K12 genome corresponding to 50.0-68.8 min on the linkage map and analysis of its sequence features.</title>
        <authorList>
            <person name="Yamamoto Y."/>
            <person name="Aiba H."/>
            <person name="Baba T."/>
            <person name="Hayashi K."/>
            <person name="Inada T."/>
            <person name="Isono K."/>
            <person name="Itoh T."/>
            <person name="Kimura S."/>
            <person name="Kitagawa M."/>
            <person name="Makino K."/>
            <person name="Miki T."/>
            <person name="Mitsuhashi N."/>
            <person name="Mizobuchi K."/>
            <person name="Mori H."/>
            <person name="Nakade S."/>
            <person name="Nakamura Y."/>
            <person name="Nashimoto H."/>
            <person name="Oshima T."/>
            <person name="Oyama S."/>
            <person name="Saito N."/>
            <person name="Sampei G."/>
            <person name="Satoh Y."/>
            <person name="Sivasundaram S."/>
            <person name="Tagami H."/>
            <person name="Takahashi H."/>
            <person name="Takeda J."/>
            <person name="Takemoto K."/>
            <person name="Uehara K."/>
            <person name="Wada C."/>
            <person name="Yamagata S."/>
            <person name="Horiuchi T."/>
        </authorList>
    </citation>
    <scope>NUCLEOTIDE SEQUENCE [LARGE SCALE GENOMIC DNA]</scope>
    <source>
        <strain>K12 / W3110 / ATCC 27325 / DSM 5911</strain>
    </source>
</reference>
<reference key="3">
    <citation type="journal article" date="1997" name="Science">
        <title>The complete genome sequence of Escherichia coli K-12.</title>
        <authorList>
            <person name="Blattner F.R."/>
            <person name="Plunkett G. III"/>
            <person name="Bloch C.A."/>
            <person name="Perna N.T."/>
            <person name="Burland V."/>
            <person name="Riley M."/>
            <person name="Collado-Vides J."/>
            <person name="Glasner J.D."/>
            <person name="Rode C.K."/>
            <person name="Mayhew G.F."/>
            <person name="Gregor J."/>
            <person name="Davis N.W."/>
            <person name="Kirkpatrick H.A."/>
            <person name="Goeden M.A."/>
            <person name="Rose D.J."/>
            <person name="Mau B."/>
            <person name="Shao Y."/>
        </authorList>
    </citation>
    <scope>NUCLEOTIDE SEQUENCE [LARGE SCALE GENOMIC DNA]</scope>
    <source>
        <strain>K12 / MG1655 / ATCC 47076</strain>
    </source>
</reference>
<reference key="4">
    <citation type="journal article" date="2006" name="Mol. Syst. Biol.">
        <title>Highly accurate genome sequences of Escherichia coli K-12 strains MG1655 and W3110.</title>
        <authorList>
            <person name="Hayashi K."/>
            <person name="Morooka N."/>
            <person name="Yamamoto Y."/>
            <person name="Fujita K."/>
            <person name="Isono K."/>
            <person name="Choi S."/>
            <person name="Ohtsubo E."/>
            <person name="Baba T."/>
            <person name="Wanner B.L."/>
            <person name="Mori H."/>
            <person name="Horiuchi T."/>
        </authorList>
    </citation>
    <scope>NUCLEOTIDE SEQUENCE [LARGE SCALE GENOMIC DNA]</scope>
    <source>
        <strain>K12 / W3110 / ATCC 27325 / DSM 5911</strain>
    </source>
</reference>
<reference key="5">
    <citation type="journal article" date="2005" name="J. Bacteriol.">
        <title>Genome-wide transcriptional response of chemostat-cultured Escherichia coli to zinc.</title>
        <authorList>
            <person name="Lee L.J."/>
            <person name="Barrett J.A."/>
            <person name="Poole R.K."/>
        </authorList>
    </citation>
    <scope>INDUCTION BY ZINC</scope>
</reference>
<protein>
    <recommendedName>
        <fullName>Lipopolysaccharide core heptose(II)-phosphate phosphatase</fullName>
        <ecNumber>3.1.3.-</ecNumber>
    </recommendedName>
    <alternativeName>
        <fullName>Polymyxin resistance protein PmrG</fullName>
    </alternativeName>
</protein>
<name>AIS_ECOLI</name>
<organism>
    <name type="scientific">Escherichia coli (strain K12)</name>
    <dbReference type="NCBI Taxonomy" id="83333"/>
    <lineage>
        <taxon>Bacteria</taxon>
        <taxon>Pseudomonadati</taxon>
        <taxon>Pseudomonadota</taxon>
        <taxon>Gammaproteobacteria</taxon>
        <taxon>Enterobacterales</taxon>
        <taxon>Enterobacteriaceae</taxon>
        <taxon>Escherichia</taxon>
    </lineage>
</organism>
<accession>P45565</accession>
<accession>P77314</accession>
<comment type="function">
    <text evidence="1">Catalyzes the dephosphorylation of heptose(II) of the outer membrane lipopolysaccharide core.</text>
</comment>
<comment type="pathway">
    <text>Bacterial outer membrane biogenesis; lipopolysaccharide metabolism.</text>
</comment>
<comment type="subcellular location">
    <subcellularLocation>
        <location evidence="1">Periplasm</location>
    </subcellularLocation>
</comment>
<comment type="induction">
    <text evidence="1 3">Induced by BasR (By similarity). Expression is significantly induced in the presence of zinc.</text>
</comment>
<comment type="similarity">
    <text evidence="4">Belongs to the phosphoglycerate mutase family. Ais subfamily.</text>
</comment>
<gene>
    <name type="primary">ais</name>
    <name type="synonym">pmrG</name>
    <name type="ordered locus">b2252</name>
    <name type="ordered locus">JW2246</name>
</gene>
<keyword id="KW-0378">Hydrolase</keyword>
<keyword id="KW-0574">Periplasm</keyword>
<keyword id="KW-1185">Reference proteome</keyword>
<keyword id="KW-0732">Signal</keyword>
<dbReference type="EC" id="3.1.3.-"/>
<dbReference type="EMBL" id="X83874">
    <property type="protein sequence ID" value="CAA58754.1"/>
    <property type="molecule type" value="Genomic_DNA"/>
</dbReference>
<dbReference type="EMBL" id="U00096">
    <property type="protein sequence ID" value="AAC75312.1"/>
    <property type="molecule type" value="Genomic_DNA"/>
</dbReference>
<dbReference type="EMBL" id="AP009048">
    <property type="protein sequence ID" value="BAA16075.1"/>
    <property type="molecule type" value="Genomic_DNA"/>
</dbReference>
<dbReference type="PIR" id="B64996">
    <property type="entry name" value="B64996"/>
</dbReference>
<dbReference type="RefSeq" id="NP_416755.1">
    <property type="nucleotide sequence ID" value="NC_000913.3"/>
</dbReference>
<dbReference type="RefSeq" id="WP_000879112.1">
    <property type="nucleotide sequence ID" value="NZ_LN832404.1"/>
</dbReference>
<dbReference type="SMR" id="P45565"/>
<dbReference type="BioGRID" id="4260487">
    <property type="interactions" value="13"/>
</dbReference>
<dbReference type="FunCoup" id="P45565">
    <property type="interactions" value="40"/>
</dbReference>
<dbReference type="IntAct" id="P45565">
    <property type="interactions" value="2"/>
</dbReference>
<dbReference type="STRING" id="511145.b2252"/>
<dbReference type="PaxDb" id="511145-b2252"/>
<dbReference type="EnsemblBacteria" id="AAC75312">
    <property type="protein sequence ID" value="AAC75312"/>
    <property type="gene ID" value="b2252"/>
</dbReference>
<dbReference type="GeneID" id="944945"/>
<dbReference type="KEGG" id="ecj:JW2246"/>
<dbReference type="KEGG" id="eco:b2252"/>
<dbReference type="KEGG" id="ecoc:C3026_12580"/>
<dbReference type="PATRIC" id="fig|511145.12.peg.2344"/>
<dbReference type="EchoBASE" id="EB2949"/>
<dbReference type="eggNOG" id="COG0406">
    <property type="taxonomic scope" value="Bacteria"/>
</dbReference>
<dbReference type="HOGENOM" id="CLU_106705_1_0_6"/>
<dbReference type="InParanoid" id="P45565"/>
<dbReference type="OMA" id="NFTVIVW"/>
<dbReference type="OrthoDB" id="6195868at2"/>
<dbReference type="PhylomeDB" id="P45565"/>
<dbReference type="BioCyc" id="EcoCyc:G7165-MONOMER"/>
<dbReference type="UniPathway" id="UPA00451"/>
<dbReference type="PRO" id="PR:P45565"/>
<dbReference type="Proteomes" id="UP000000625">
    <property type="component" value="Chromosome"/>
</dbReference>
<dbReference type="GO" id="GO:0042597">
    <property type="term" value="C:periplasmic space"/>
    <property type="evidence" value="ECO:0007669"/>
    <property type="project" value="UniProtKB-SubCell"/>
</dbReference>
<dbReference type="GO" id="GO:0016791">
    <property type="term" value="F:phosphatase activity"/>
    <property type="evidence" value="ECO:0007669"/>
    <property type="project" value="UniProtKB-UniRule"/>
</dbReference>
<dbReference type="GO" id="GO:0008653">
    <property type="term" value="P:lipopolysaccharide metabolic process"/>
    <property type="evidence" value="ECO:0007669"/>
    <property type="project" value="UniProtKB-UniRule"/>
</dbReference>
<dbReference type="CDD" id="cd07040">
    <property type="entry name" value="HP"/>
    <property type="match status" value="1"/>
</dbReference>
<dbReference type="Gene3D" id="3.40.50.1240">
    <property type="entry name" value="Phosphoglycerate mutase-like"/>
    <property type="match status" value="1"/>
</dbReference>
<dbReference type="HAMAP" id="MF_01868">
    <property type="entry name" value="Ais"/>
    <property type="match status" value="1"/>
</dbReference>
<dbReference type="InterPro" id="IPR013078">
    <property type="entry name" value="His_Pase_superF_clade-1"/>
</dbReference>
<dbReference type="InterPro" id="IPR029033">
    <property type="entry name" value="His_PPase_superfam"/>
</dbReference>
<dbReference type="InterPro" id="IPR011310">
    <property type="entry name" value="LipoPS_heptP_Pase"/>
</dbReference>
<dbReference type="NCBIfam" id="NF011945">
    <property type="entry name" value="PRK15416.1"/>
    <property type="match status" value="1"/>
</dbReference>
<dbReference type="Pfam" id="PF00300">
    <property type="entry name" value="His_Phos_1"/>
    <property type="match status" value="1"/>
</dbReference>
<dbReference type="PIRSF" id="PIRSF011416">
    <property type="entry name" value="Ais-TraG-AfrS"/>
    <property type="match status" value="1"/>
</dbReference>
<dbReference type="SUPFAM" id="SSF53254">
    <property type="entry name" value="Phosphoglycerate mutase-like"/>
    <property type="match status" value="1"/>
</dbReference>
<feature type="signal peptide" evidence="2">
    <location>
        <begin position="1"/>
        <end position="25"/>
    </location>
</feature>
<feature type="chain" id="PRO_0000064515" description="Lipopolysaccharide core heptose(II)-phosphate phosphatase">
    <location>
        <begin position="26"/>
        <end position="200"/>
    </location>
</feature>
<feature type="sequence conflict" description="In Ref. 1; CAA58754." evidence="4" ref="1">
    <original>H</original>
    <variation>Y</variation>
    <location>
        <position position="200"/>
    </location>
</feature>
<sequence>MLAFCRSSLKSKKYIIILLALAAIAGLGTHAAWSSNGLPRIDNKTLARLAQQHPVVVLFRHAERCDRSTNQCLSDKTGITVKGTQDARELGNAFSADIPDFDLYSSNTVRTIQSATWFSAGKKLTVDKRLLQCGNEIYSAIKDLQSKAPDKNIVIFTHNHCLTYIAKDKRDATFKPDYLDGLVMHVEKGKVYLDGEFVNH</sequence>
<proteinExistence type="evidence at transcript level"/>
<evidence type="ECO:0000250" key="1"/>
<evidence type="ECO:0000255" key="2"/>
<evidence type="ECO:0000269" key="3">
    <source>
    </source>
</evidence>
<evidence type="ECO:0000305" key="4"/>